<name>SYL_PSEPG</name>
<proteinExistence type="inferred from homology"/>
<protein>
    <recommendedName>
        <fullName evidence="1">Leucine--tRNA ligase</fullName>
        <ecNumber evidence="1">6.1.1.4</ecNumber>
    </recommendedName>
    <alternativeName>
        <fullName evidence="1">Leucyl-tRNA synthetase</fullName>
        <shortName evidence="1">LeuRS</shortName>
    </alternativeName>
</protein>
<sequence>MHEQYTPRDIEAAAQKFWDEQQSFAVTEQPGKDTYYCLSMFPYPSGKLHMGHVRNYTIGDVIARYQRMLGKNVLQPMGWDAFGMPAENAAMKNNVAPAKWTYENIDYMKTQLKSLGLAIDWAREVTTCKPDYYRWEQWLFTRLFEKGIIYRKNGTVNWDPADQTVLANEQVIDGRGWRSGALIEKREIPMYYFRITDYADELLESLDELPGWPEQVKTMQRNWIGKSRGMEVQFPYDQASIGHEGTLKVFTTRPDTLMGATYVAVAAEHPLATQAAQGNPALQAFIDECKSGSVAEADMATQEKKGMATSLLVEHPLTGEKLPVWVANYVLMHYGDGAVMAVPAHDERDFEFAHKYNLPVKAVVRTSAGDEVGSEWQAAYGEHGQLINSAEFDGLDFAGAFDAIEAALIRKELGKSRTQFRLRDWGISRQRYWGCPIPIIHCPSCGDVPVPEDQLPVTLPENVVPDGAGSPLARMPEFYECTCPKCGTAAKRETDTMDTFVESSWYFARYASPNYDKGLVDPKAANHWLPVDQYIGGIEHAILHLLYARFFHKLMRDEGLVTSNEPFKNLLTQGMVVAETYYRVASNGGKDWFNPADVEIERDAKAKIIGARLKTDGLPVEIGGTEKMSKSKNNGVDPQSMIEAYGADTCRLFMMFASPPDMSLEWSDSGVEGASRFLRRVWRLAQAHVSQGLPGKLDVATLDDAQKVIRRAIHAAIKQASTDVGQFHKFNTAIAQVMTVMNVLEKAPQATEQDRALLQEGLEAVTLLLAPITPHISHELWQQLGHAGSVIDAAWPSVDEQALVQDTITLVVQVNGKLRGQVEMPAAASREEVEAAARGNENVLRFIDGLTIRKVIVVPGKLVNIVAN</sequence>
<comment type="catalytic activity">
    <reaction evidence="1">
        <text>tRNA(Leu) + L-leucine + ATP = L-leucyl-tRNA(Leu) + AMP + diphosphate</text>
        <dbReference type="Rhea" id="RHEA:11688"/>
        <dbReference type="Rhea" id="RHEA-COMP:9613"/>
        <dbReference type="Rhea" id="RHEA-COMP:9622"/>
        <dbReference type="ChEBI" id="CHEBI:30616"/>
        <dbReference type="ChEBI" id="CHEBI:33019"/>
        <dbReference type="ChEBI" id="CHEBI:57427"/>
        <dbReference type="ChEBI" id="CHEBI:78442"/>
        <dbReference type="ChEBI" id="CHEBI:78494"/>
        <dbReference type="ChEBI" id="CHEBI:456215"/>
        <dbReference type="EC" id="6.1.1.4"/>
    </reaction>
</comment>
<comment type="subcellular location">
    <subcellularLocation>
        <location evidence="1">Cytoplasm</location>
    </subcellularLocation>
</comment>
<comment type="similarity">
    <text evidence="1">Belongs to the class-I aminoacyl-tRNA synthetase family.</text>
</comment>
<reference key="1">
    <citation type="submission" date="2008-01" db="EMBL/GenBank/DDBJ databases">
        <title>Complete sequence of Pseudomonas putida GB-1.</title>
        <authorList>
            <consortium name="US DOE Joint Genome Institute"/>
            <person name="Copeland A."/>
            <person name="Lucas S."/>
            <person name="Lapidus A."/>
            <person name="Barry K."/>
            <person name="Glavina del Rio T."/>
            <person name="Dalin E."/>
            <person name="Tice H."/>
            <person name="Pitluck S."/>
            <person name="Bruce D."/>
            <person name="Goodwin L."/>
            <person name="Chertkov O."/>
            <person name="Brettin T."/>
            <person name="Detter J.C."/>
            <person name="Han C."/>
            <person name="Kuske C.R."/>
            <person name="Schmutz J."/>
            <person name="Larimer F."/>
            <person name="Land M."/>
            <person name="Hauser L."/>
            <person name="Kyrpides N."/>
            <person name="Kim E."/>
            <person name="McCarthy J.K."/>
            <person name="Richardson P."/>
        </authorList>
    </citation>
    <scope>NUCLEOTIDE SEQUENCE [LARGE SCALE GENOMIC DNA]</scope>
    <source>
        <strain>GB-1</strain>
    </source>
</reference>
<feature type="chain" id="PRO_1000074840" description="Leucine--tRNA ligase">
    <location>
        <begin position="1"/>
        <end position="868"/>
    </location>
</feature>
<feature type="short sequence motif" description="'HIGH' region">
    <location>
        <begin position="42"/>
        <end position="52"/>
    </location>
</feature>
<feature type="short sequence motif" description="'KMSKS' region">
    <location>
        <begin position="627"/>
        <end position="631"/>
    </location>
</feature>
<feature type="binding site" evidence="1">
    <location>
        <position position="630"/>
    </location>
    <ligand>
        <name>ATP</name>
        <dbReference type="ChEBI" id="CHEBI:30616"/>
    </ligand>
</feature>
<accession>B0KJW8</accession>
<organism>
    <name type="scientific">Pseudomonas putida (strain GB-1)</name>
    <dbReference type="NCBI Taxonomy" id="76869"/>
    <lineage>
        <taxon>Bacteria</taxon>
        <taxon>Pseudomonadati</taxon>
        <taxon>Pseudomonadota</taxon>
        <taxon>Gammaproteobacteria</taxon>
        <taxon>Pseudomonadales</taxon>
        <taxon>Pseudomonadaceae</taxon>
        <taxon>Pseudomonas</taxon>
    </lineage>
</organism>
<gene>
    <name evidence="1" type="primary">leuS</name>
    <name type="ordered locus">PputGB1_4847</name>
</gene>
<evidence type="ECO:0000255" key="1">
    <source>
        <dbReference type="HAMAP-Rule" id="MF_00049"/>
    </source>
</evidence>
<keyword id="KW-0030">Aminoacyl-tRNA synthetase</keyword>
<keyword id="KW-0067">ATP-binding</keyword>
<keyword id="KW-0963">Cytoplasm</keyword>
<keyword id="KW-0436">Ligase</keyword>
<keyword id="KW-0547">Nucleotide-binding</keyword>
<keyword id="KW-0648">Protein biosynthesis</keyword>
<dbReference type="EC" id="6.1.1.4" evidence="1"/>
<dbReference type="EMBL" id="CP000926">
    <property type="protein sequence ID" value="ABZ00732.1"/>
    <property type="molecule type" value="Genomic_DNA"/>
</dbReference>
<dbReference type="RefSeq" id="WP_012274365.1">
    <property type="nucleotide sequence ID" value="NC_010322.1"/>
</dbReference>
<dbReference type="SMR" id="B0KJW8"/>
<dbReference type="KEGG" id="ppg:PputGB1_4847"/>
<dbReference type="eggNOG" id="COG0495">
    <property type="taxonomic scope" value="Bacteria"/>
</dbReference>
<dbReference type="HOGENOM" id="CLU_004427_0_0_6"/>
<dbReference type="Proteomes" id="UP000002157">
    <property type="component" value="Chromosome"/>
</dbReference>
<dbReference type="GO" id="GO:0005829">
    <property type="term" value="C:cytosol"/>
    <property type="evidence" value="ECO:0007669"/>
    <property type="project" value="TreeGrafter"/>
</dbReference>
<dbReference type="GO" id="GO:0002161">
    <property type="term" value="F:aminoacyl-tRNA deacylase activity"/>
    <property type="evidence" value="ECO:0007669"/>
    <property type="project" value="InterPro"/>
</dbReference>
<dbReference type="GO" id="GO:0005524">
    <property type="term" value="F:ATP binding"/>
    <property type="evidence" value="ECO:0007669"/>
    <property type="project" value="UniProtKB-UniRule"/>
</dbReference>
<dbReference type="GO" id="GO:0004823">
    <property type="term" value="F:leucine-tRNA ligase activity"/>
    <property type="evidence" value="ECO:0007669"/>
    <property type="project" value="UniProtKB-UniRule"/>
</dbReference>
<dbReference type="GO" id="GO:0006429">
    <property type="term" value="P:leucyl-tRNA aminoacylation"/>
    <property type="evidence" value="ECO:0007669"/>
    <property type="project" value="UniProtKB-UniRule"/>
</dbReference>
<dbReference type="CDD" id="cd07958">
    <property type="entry name" value="Anticodon_Ia_Leu_BEm"/>
    <property type="match status" value="1"/>
</dbReference>
<dbReference type="CDD" id="cd00812">
    <property type="entry name" value="LeuRS_core"/>
    <property type="match status" value="1"/>
</dbReference>
<dbReference type="FunFam" id="1.10.730.10:FF:000003">
    <property type="entry name" value="Leucine--tRNA ligase"/>
    <property type="match status" value="1"/>
</dbReference>
<dbReference type="FunFam" id="2.20.28.290:FF:000001">
    <property type="entry name" value="Leucine--tRNA ligase"/>
    <property type="match status" value="1"/>
</dbReference>
<dbReference type="FunFam" id="3.10.20.590:FF:000001">
    <property type="entry name" value="Leucine--tRNA ligase"/>
    <property type="match status" value="1"/>
</dbReference>
<dbReference type="FunFam" id="3.40.50.620:FF:000003">
    <property type="entry name" value="Leucine--tRNA ligase"/>
    <property type="match status" value="1"/>
</dbReference>
<dbReference type="FunFam" id="3.40.50.620:FF:000124">
    <property type="entry name" value="Leucine--tRNA ligase"/>
    <property type="match status" value="1"/>
</dbReference>
<dbReference type="FunFam" id="3.90.740.10:FF:000012">
    <property type="entry name" value="Leucine--tRNA ligase"/>
    <property type="match status" value="1"/>
</dbReference>
<dbReference type="Gene3D" id="2.20.28.290">
    <property type="match status" value="1"/>
</dbReference>
<dbReference type="Gene3D" id="3.10.20.590">
    <property type="match status" value="1"/>
</dbReference>
<dbReference type="Gene3D" id="3.40.50.620">
    <property type="entry name" value="HUPs"/>
    <property type="match status" value="2"/>
</dbReference>
<dbReference type="Gene3D" id="1.10.730.10">
    <property type="entry name" value="Isoleucyl-tRNA Synthetase, Domain 1"/>
    <property type="match status" value="2"/>
</dbReference>
<dbReference type="Gene3D" id="3.90.740.10">
    <property type="entry name" value="Valyl/Leucyl/Isoleucyl-tRNA synthetase, editing domain"/>
    <property type="match status" value="1"/>
</dbReference>
<dbReference type="HAMAP" id="MF_00049_B">
    <property type="entry name" value="Leu_tRNA_synth_B"/>
    <property type="match status" value="1"/>
</dbReference>
<dbReference type="InterPro" id="IPR001412">
    <property type="entry name" value="aa-tRNA-synth_I_CS"/>
</dbReference>
<dbReference type="InterPro" id="IPR002300">
    <property type="entry name" value="aa-tRNA-synth_Ia"/>
</dbReference>
<dbReference type="InterPro" id="IPR002302">
    <property type="entry name" value="Leu-tRNA-ligase"/>
</dbReference>
<dbReference type="InterPro" id="IPR025709">
    <property type="entry name" value="Leu_tRNA-synth_edit"/>
</dbReference>
<dbReference type="InterPro" id="IPR013155">
    <property type="entry name" value="M/V/L/I-tRNA-synth_anticd-bd"/>
</dbReference>
<dbReference type="InterPro" id="IPR015413">
    <property type="entry name" value="Methionyl/Leucyl_tRNA_Synth"/>
</dbReference>
<dbReference type="InterPro" id="IPR014729">
    <property type="entry name" value="Rossmann-like_a/b/a_fold"/>
</dbReference>
<dbReference type="InterPro" id="IPR009080">
    <property type="entry name" value="tRNAsynth_Ia_anticodon-bd"/>
</dbReference>
<dbReference type="InterPro" id="IPR009008">
    <property type="entry name" value="Val/Leu/Ile-tRNA-synth_edit"/>
</dbReference>
<dbReference type="NCBIfam" id="TIGR00396">
    <property type="entry name" value="leuS_bact"/>
    <property type="match status" value="1"/>
</dbReference>
<dbReference type="PANTHER" id="PTHR43740:SF2">
    <property type="entry name" value="LEUCINE--TRNA LIGASE, MITOCHONDRIAL"/>
    <property type="match status" value="1"/>
</dbReference>
<dbReference type="PANTHER" id="PTHR43740">
    <property type="entry name" value="LEUCYL-TRNA SYNTHETASE"/>
    <property type="match status" value="1"/>
</dbReference>
<dbReference type="Pfam" id="PF08264">
    <property type="entry name" value="Anticodon_1"/>
    <property type="match status" value="1"/>
</dbReference>
<dbReference type="Pfam" id="PF00133">
    <property type="entry name" value="tRNA-synt_1"/>
    <property type="match status" value="2"/>
</dbReference>
<dbReference type="Pfam" id="PF13603">
    <property type="entry name" value="tRNA-synt_1_2"/>
    <property type="match status" value="1"/>
</dbReference>
<dbReference type="Pfam" id="PF09334">
    <property type="entry name" value="tRNA-synt_1g"/>
    <property type="match status" value="1"/>
</dbReference>
<dbReference type="PRINTS" id="PR00985">
    <property type="entry name" value="TRNASYNTHLEU"/>
</dbReference>
<dbReference type="SUPFAM" id="SSF47323">
    <property type="entry name" value="Anticodon-binding domain of a subclass of class I aminoacyl-tRNA synthetases"/>
    <property type="match status" value="1"/>
</dbReference>
<dbReference type="SUPFAM" id="SSF52374">
    <property type="entry name" value="Nucleotidylyl transferase"/>
    <property type="match status" value="1"/>
</dbReference>
<dbReference type="SUPFAM" id="SSF50677">
    <property type="entry name" value="ValRS/IleRS/LeuRS editing domain"/>
    <property type="match status" value="1"/>
</dbReference>
<dbReference type="PROSITE" id="PS00178">
    <property type="entry name" value="AA_TRNA_LIGASE_I"/>
    <property type="match status" value="1"/>
</dbReference>